<comment type="similarity">
    <text evidence="1">Belongs to the bacterial ribosomal protein bL34 family.</text>
</comment>
<keyword id="KW-0687">Ribonucleoprotein</keyword>
<keyword id="KW-0689">Ribosomal protein</keyword>
<dbReference type="EMBL" id="CP000241">
    <property type="protein sequence ID" value="ABF85440.1"/>
    <property type="molecule type" value="Genomic_DNA"/>
</dbReference>
<dbReference type="RefSeq" id="WP_001847286.1">
    <property type="nucleotide sequence ID" value="NC_008086.1"/>
</dbReference>
<dbReference type="SMR" id="Q1CRI2"/>
<dbReference type="GeneID" id="93236353"/>
<dbReference type="KEGG" id="hpa:HPAG1_1373"/>
<dbReference type="HOGENOM" id="CLU_129938_2_0_7"/>
<dbReference type="GO" id="GO:1990904">
    <property type="term" value="C:ribonucleoprotein complex"/>
    <property type="evidence" value="ECO:0007669"/>
    <property type="project" value="UniProtKB-KW"/>
</dbReference>
<dbReference type="GO" id="GO:0005840">
    <property type="term" value="C:ribosome"/>
    <property type="evidence" value="ECO:0007669"/>
    <property type="project" value="UniProtKB-KW"/>
</dbReference>
<dbReference type="GO" id="GO:0003735">
    <property type="term" value="F:structural constituent of ribosome"/>
    <property type="evidence" value="ECO:0007669"/>
    <property type="project" value="InterPro"/>
</dbReference>
<dbReference type="GO" id="GO:0006412">
    <property type="term" value="P:translation"/>
    <property type="evidence" value="ECO:0007669"/>
    <property type="project" value="UniProtKB-UniRule"/>
</dbReference>
<dbReference type="FunFam" id="1.10.287.3980:FF:000001">
    <property type="entry name" value="Mitochondrial ribosomal protein L34"/>
    <property type="match status" value="1"/>
</dbReference>
<dbReference type="Gene3D" id="1.10.287.3980">
    <property type="match status" value="1"/>
</dbReference>
<dbReference type="HAMAP" id="MF_00391">
    <property type="entry name" value="Ribosomal_bL34"/>
    <property type="match status" value="1"/>
</dbReference>
<dbReference type="InterPro" id="IPR000271">
    <property type="entry name" value="Ribosomal_bL34"/>
</dbReference>
<dbReference type="InterPro" id="IPR020939">
    <property type="entry name" value="Ribosomal_bL34_CS"/>
</dbReference>
<dbReference type="NCBIfam" id="TIGR01030">
    <property type="entry name" value="rpmH_bact"/>
    <property type="match status" value="1"/>
</dbReference>
<dbReference type="PANTHER" id="PTHR14503:SF4">
    <property type="entry name" value="LARGE RIBOSOMAL SUBUNIT PROTEIN BL34M"/>
    <property type="match status" value="1"/>
</dbReference>
<dbReference type="PANTHER" id="PTHR14503">
    <property type="entry name" value="MITOCHONDRIAL RIBOSOMAL PROTEIN 34 FAMILY MEMBER"/>
    <property type="match status" value="1"/>
</dbReference>
<dbReference type="Pfam" id="PF00468">
    <property type="entry name" value="Ribosomal_L34"/>
    <property type="match status" value="1"/>
</dbReference>
<dbReference type="PROSITE" id="PS00784">
    <property type="entry name" value="RIBOSOMAL_L34"/>
    <property type="match status" value="1"/>
</dbReference>
<reference key="1">
    <citation type="journal article" date="2006" name="Proc. Natl. Acad. Sci. U.S.A.">
        <title>The complete genome sequence of a chronic atrophic gastritis Helicobacter pylori strain: evolution during disease progression.</title>
        <authorList>
            <person name="Oh J.D."/>
            <person name="Kling-Baeckhed H."/>
            <person name="Giannakis M."/>
            <person name="Xu J."/>
            <person name="Fulton R.S."/>
            <person name="Fulton L.A."/>
            <person name="Cordum H.S."/>
            <person name="Wang C."/>
            <person name="Elliott G."/>
            <person name="Edwards J."/>
            <person name="Mardis E.R."/>
            <person name="Engstrand L.G."/>
            <person name="Gordon J.I."/>
        </authorList>
    </citation>
    <scope>NUCLEOTIDE SEQUENCE [LARGE SCALE GENOMIC DNA]</scope>
    <source>
        <strain>HPAG1</strain>
    </source>
</reference>
<name>RL34_HELPH</name>
<feature type="chain" id="PRO_1000013353" description="Large ribosomal subunit protein bL34">
    <location>
        <begin position="1"/>
        <end position="44"/>
    </location>
</feature>
<gene>
    <name evidence="1" type="primary">rpmH</name>
    <name type="ordered locus">HPAG1_1373</name>
</gene>
<accession>Q1CRI2</accession>
<protein>
    <recommendedName>
        <fullName evidence="1">Large ribosomal subunit protein bL34</fullName>
    </recommendedName>
    <alternativeName>
        <fullName evidence="2">50S ribosomal protein L34</fullName>
    </alternativeName>
</protein>
<proteinExistence type="inferred from homology"/>
<sequence>MKRTYQPHNTPRKRTHGFLVRMKTKNGRKVINARRAKGRKKLSV</sequence>
<organism>
    <name type="scientific">Helicobacter pylori (strain HPAG1)</name>
    <dbReference type="NCBI Taxonomy" id="357544"/>
    <lineage>
        <taxon>Bacteria</taxon>
        <taxon>Pseudomonadati</taxon>
        <taxon>Campylobacterota</taxon>
        <taxon>Epsilonproteobacteria</taxon>
        <taxon>Campylobacterales</taxon>
        <taxon>Helicobacteraceae</taxon>
        <taxon>Helicobacter</taxon>
    </lineage>
</organism>
<evidence type="ECO:0000255" key="1">
    <source>
        <dbReference type="HAMAP-Rule" id="MF_00391"/>
    </source>
</evidence>
<evidence type="ECO:0000305" key="2"/>